<name>NQRB_YERPE</name>
<feature type="chain" id="PRO_0000074449" description="Na(+)-translocating NADH-quinone reductase subunit B">
    <location>
        <begin position="1"/>
        <end position="413"/>
    </location>
</feature>
<feature type="transmembrane region" description="Helical" evidence="1">
    <location>
        <begin position="56"/>
        <end position="76"/>
    </location>
</feature>
<feature type="transmembrane region" description="Helical" evidence="1">
    <location>
        <begin position="123"/>
        <end position="143"/>
    </location>
</feature>
<feature type="transmembrane region" description="Helical" evidence="1">
    <location>
        <begin position="169"/>
        <end position="189"/>
    </location>
</feature>
<feature type="transmembrane region" description="Helical" evidence="1">
    <location>
        <begin position="270"/>
        <end position="290"/>
    </location>
</feature>
<feature type="transmembrane region" description="Helical" evidence="1">
    <location>
        <begin position="297"/>
        <end position="317"/>
    </location>
</feature>
<feature type="transmembrane region" description="Helical" evidence="1">
    <location>
        <begin position="322"/>
        <end position="342"/>
    </location>
</feature>
<feature type="transmembrane region" description="Helical" evidence="1">
    <location>
        <begin position="358"/>
        <end position="378"/>
    </location>
</feature>
<feature type="transmembrane region" description="Helical" evidence="1">
    <location>
        <begin position="381"/>
        <end position="401"/>
    </location>
</feature>
<feature type="modified residue" description="FMN phosphoryl threonine" evidence="1">
    <location>
        <position position="236"/>
    </location>
</feature>
<dbReference type="EC" id="7.2.1.1" evidence="1"/>
<dbReference type="EMBL" id="AL590842">
    <property type="protein sequence ID" value="CAL21833.1"/>
    <property type="molecule type" value="Genomic_DNA"/>
</dbReference>
<dbReference type="EMBL" id="AE009952">
    <property type="protein sequence ID" value="AAM84533.1"/>
    <property type="molecule type" value="Genomic_DNA"/>
</dbReference>
<dbReference type="EMBL" id="AE017042">
    <property type="protein sequence ID" value="AAS60960.1"/>
    <property type="molecule type" value="Genomic_DNA"/>
</dbReference>
<dbReference type="PIR" id="AF0393">
    <property type="entry name" value="AF0393"/>
</dbReference>
<dbReference type="RefSeq" id="WP_002208716.1">
    <property type="nucleotide sequence ID" value="NZ_WUCM01000034.1"/>
</dbReference>
<dbReference type="RefSeq" id="YP_002348141.1">
    <property type="nucleotide sequence ID" value="NC_003143.1"/>
</dbReference>
<dbReference type="SMR" id="Q8ZBZ1"/>
<dbReference type="STRING" id="214092.YPO3239"/>
<dbReference type="PaxDb" id="214092-YPO3239"/>
<dbReference type="DNASU" id="1145899"/>
<dbReference type="EnsemblBacteria" id="AAS60960">
    <property type="protein sequence ID" value="AAS60960"/>
    <property type="gene ID" value="YP_0694"/>
</dbReference>
<dbReference type="KEGG" id="ype:YPO3239"/>
<dbReference type="KEGG" id="ypk:y0952"/>
<dbReference type="KEGG" id="ypm:YP_0694"/>
<dbReference type="PATRIC" id="fig|214092.21.peg.3699"/>
<dbReference type="eggNOG" id="COG1805">
    <property type="taxonomic scope" value="Bacteria"/>
</dbReference>
<dbReference type="HOGENOM" id="CLU_042020_1_1_6"/>
<dbReference type="OMA" id="FAPTIDH"/>
<dbReference type="OrthoDB" id="9776359at2"/>
<dbReference type="Proteomes" id="UP000000815">
    <property type="component" value="Chromosome"/>
</dbReference>
<dbReference type="Proteomes" id="UP000001019">
    <property type="component" value="Chromosome"/>
</dbReference>
<dbReference type="Proteomes" id="UP000002490">
    <property type="component" value="Chromosome"/>
</dbReference>
<dbReference type="GO" id="GO:0005886">
    <property type="term" value="C:plasma membrane"/>
    <property type="evidence" value="ECO:0000318"/>
    <property type="project" value="GO_Central"/>
</dbReference>
<dbReference type="GO" id="GO:0010181">
    <property type="term" value="F:FMN binding"/>
    <property type="evidence" value="ECO:0007669"/>
    <property type="project" value="InterPro"/>
</dbReference>
<dbReference type="GO" id="GO:0016655">
    <property type="term" value="F:oxidoreductase activity, acting on NAD(P)H, quinone or similar compound as acceptor"/>
    <property type="evidence" value="ECO:0007669"/>
    <property type="project" value="UniProtKB-UniRule"/>
</dbReference>
<dbReference type="GO" id="GO:0022904">
    <property type="term" value="P:respiratory electron transport chain"/>
    <property type="evidence" value="ECO:0007669"/>
    <property type="project" value="InterPro"/>
</dbReference>
<dbReference type="GO" id="GO:0006814">
    <property type="term" value="P:sodium ion transport"/>
    <property type="evidence" value="ECO:0007669"/>
    <property type="project" value="UniProtKB-UniRule"/>
</dbReference>
<dbReference type="GO" id="GO:0055085">
    <property type="term" value="P:transmembrane transport"/>
    <property type="evidence" value="ECO:0007669"/>
    <property type="project" value="InterPro"/>
</dbReference>
<dbReference type="HAMAP" id="MF_00426">
    <property type="entry name" value="NqrB"/>
    <property type="match status" value="1"/>
</dbReference>
<dbReference type="InterPro" id="IPR010966">
    <property type="entry name" value="NqrB"/>
</dbReference>
<dbReference type="InterPro" id="IPR004338">
    <property type="entry name" value="NqrB/RnfD"/>
</dbReference>
<dbReference type="NCBIfam" id="TIGR01937">
    <property type="entry name" value="nqrB"/>
    <property type="match status" value="1"/>
</dbReference>
<dbReference type="NCBIfam" id="NF003756">
    <property type="entry name" value="PRK05349.1"/>
    <property type="match status" value="1"/>
</dbReference>
<dbReference type="PANTHER" id="PTHR30578">
    <property type="entry name" value="ELECTRON TRANSPORT COMPLEX PROTEIN RNFD"/>
    <property type="match status" value="1"/>
</dbReference>
<dbReference type="PANTHER" id="PTHR30578:SF1">
    <property type="entry name" value="NA(+)-TRANSLOCATING NADH-QUINONE REDUCTASE SUBUNIT B"/>
    <property type="match status" value="1"/>
</dbReference>
<dbReference type="Pfam" id="PF03116">
    <property type="entry name" value="NQR2_RnfD_RnfE"/>
    <property type="match status" value="1"/>
</dbReference>
<dbReference type="PIRSF" id="PIRSF016055">
    <property type="entry name" value="NADH-UbQ_OxRdtase_B_su"/>
    <property type="match status" value="1"/>
</dbReference>
<sequence length="413" mass="45379">MGLKNFLEKIEHHFEAGGKLEKYYPLYEAAATIFYTQGKVTPGASHVRDAIDLKRMMILVWFAVFPAMFWGMYNVGYQAIPALNQLYSGAELQQVIAGDWHYRLAQMLGASLTPDAGWASKMLLGAAYFLPIYAVVFLVGGFWEVVFSIVRKHEINEGFFVTSILFSLIVPPTLPLWQAALGISFGVVIGKEIFGGTGRNFLNPALAGRAFLFFAYPAQISGDLVWTSADGFSGATPLSQWSVNGSHSLVNTVSGQPITWMDAFLGYIPGSIGEVSTLMILIGGAIIIFGRVASWRIVAGVMIGMIATAYLFNWIGSTTNPLFAMPWYWHLVLGGFAFGMIFMATDPVSASFTNKGKWWYGGLIGVMCILIRVANPAYPEGMMLAILFANLFAPLFDYVVVQANIKRRKARGE</sequence>
<organism>
    <name type="scientific">Yersinia pestis</name>
    <dbReference type="NCBI Taxonomy" id="632"/>
    <lineage>
        <taxon>Bacteria</taxon>
        <taxon>Pseudomonadati</taxon>
        <taxon>Pseudomonadota</taxon>
        <taxon>Gammaproteobacteria</taxon>
        <taxon>Enterobacterales</taxon>
        <taxon>Yersiniaceae</taxon>
        <taxon>Yersinia</taxon>
    </lineage>
</organism>
<protein>
    <recommendedName>
        <fullName evidence="1">Na(+)-translocating NADH-quinone reductase subunit B</fullName>
        <shortName evidence="1">Na(+)-NQR subunit B</shortName>
        <shortName evidence="1">Na(+)-translocating NQR subunit B</shortName>
        <ecNumber evidence="1">7.2.1.1</ecNumber>
    </recommendedName>
    <alternativeName>
        <fullName evidence="1">NQR complex subunit B</fullName>
    </alternativeName>
    <alternativeName>
        <fullName evidence="1">NQR-1 subunit B</fullName>
    </alternativeName>
</protein>
<accession>Q8ZBZ1</accession>
<accession>Q0WC47</accession>
<evidence type="ECO:0000255" key="1">
    <source>
        <dbReference type="HAMAP-Rule" id="MF_00426"/>
    </source>
</evidence>
<keyword id="KW-0997">Cell inner membrane</keyword>
<keyword id="KW-1003">Cell membrane</keyword>
<keyword id="KW-0285">Flavoprotein</keyword>
<keyword id="KW-0288">FMN</keyword>
<keyword id="KW-0406">Ion transport</keyword>
<keyword id="KW-0472">Membrane</keyword>
<keyword id="KW-0520">NAD</keyword>
<keyword id="KW-0597">Phosphoprotein</keyword>
<keyword id="KW-1185">Reference proteome</keyword>
<keyword id="KW-0915">Sodium</keyword>
<keyword id="KW-0739">Sodium transport</keyword>
<keyword id="KW-1278">Translocase</keyword>
<keyword id="KW-0812">Transmembrane</keyword>
<keyword id="KW-1133">Transmembrane helix</keyword>
<keyword id="KW-0813">Transport</keyword>
<keyword id="KW-0830">Ubiquinone</keyword>
<comment type="function">
    <text evidence="1">NQR complex catalyzes the reduction of ubiquinone-1 to ubiquinol by two successive reactions, coupled with the transport of Na(+) ions from the cytoplasm to the periplasm. NqrA to NqrE are probably involved in the second step, the conversion of ubisemiquinone to ubiquinol.</text>
</comment>
<comment type="catalytic activity">
    <reaction evidence="1">
        <text>a ubiquinone + n Na(+)(in) + NADH + H(+) = a ubiquinol + n Na(+)(out) + NAD(+)</text>
        <dbReference type="Rhea" id="RHEA:47748"/>
        <dbReference type="Rhea" id="RHEA-COMP:9565"/>
        <dbReference type="Rhea" id="RHEA-COMP:9566"/>
        <dbReference type="ChEBI" id="CHEBI:15378"/>
        <dbReference type="ChEBI" id="CHEBI:16389"/>
        <dbReference type="ChEBI" id="CHEBI:17976"/>
        <dbReference type="ChEBI" id="CHEBI:29101"/>
        <dbReference type="ChEBI" id="CHEBI:57540"/>
        <dbReference type="ChEBI" id="CHEBI:57945"/>
        <dbReference type="EC" id="7.2.1.1"/>
    </reaction>
</comment>
<comment type="cofactor">
    <cofactor evidence="1">
        <name>FMN</name>
        <dbReference type="ChEBI" id="CHEBI:58210"/>
    </cofactor>
</comment>
<comment type="subunit">
    <text evidence="1">Composed of six subunits; NqrA, NqrB, NqrC, NqrD, NqrE and NqrF.</text>
</comment>
<comment type="subcellular location">
    <subcellularLocation>
        <location evidence="1">Cell inner membrane</location>
        <topology evidence="1">Multi-pass membrane protein</topology>
    </subcellularLocation>
</comment>
<comment type="similarity">
    <text evidence="1">Belongs to the NqrB/RnfD family.</text>
</comment>
<reference key="1">
    <citation type="journal article" date="2001" name="Nature">
        <title>Genome sequence of Yersinia pestis, the causative agent of plague.</title>
        <authorList>
            <person name="Parkhill J."/>
            <person name="Wren B.W."/>
            <person name="Thomson N.R."/>
            <person name="Titball R.W."/>
            <person name="Holden M.T.G."/>
            <person name="Prentice M.B."/>
            <person name="Sebaihia M."/>
            <person name="James K.D."/>
            <person name="Churcher C.M."/>
            <person name="Mungall K.L."/>
            <person name="Baker S."/>
            <person name="Basham D."/>
            <person name="Bentley S.D."/>
            <person name="Brooks K."/>
            <person name="Cerdeno-Tarraga A.-M."/>
            <person name="Chillingworth T."/>
            <person name="Cronin A."/>
            <person name="Davies R.M."/>
            <person name="Davis P."/>
            <person name="Dougan G."/>
            <person name="Feltwell T."/>
            <person name="Hamlin N."/>
            <person name="Holroyd S."/>
            <person name="Jagels K."/>
            <person name="Karlyshev A.V."/>
            <person name="Leather S."/>
            <person name="Moule S."/>
            <person name="Oyston P.C.F."/>
            <person name="Quail M.A."/>
            <person name="Rutherford K.M."/>
            <person name="Simmonds M."/>
            <person name="Skelton J."/>
            <person name="Stevens K."/>
            <person name="Whitehead S."/>
            <person name="Barrell B.G."/>
        </authorList>
    </citation>
    <scope>NUCLEOTIDE SEQUENCE [LARGE SCALE GENOMIC DNA]</scope>
    <source>
        <strain>CO-92 / Biovar Orientalis</strain>
    </source>
</reference>
<reference key="2">
    <citation type="journal article" date="2002" name="J. Bacteriol.">
        <title>Genome sequence of Yersinia pestis KIM.</title>
        <authorList>
            <person name="Deng W."/>
            <person name="Burland V."/>
            <person name="Plunkett G. III"/>
            <person name="Boutin A."/>
            <person name="Mayhew G.F."/>
            <person name="Liss P."/>
            <person name="Perna N.T."/>
            <person name="Rose D.J."/>
            <person name="Mau B."/>
            <person name="Zhou S."/>
            <person name="Schwartz D.C."/>
            <person name="Fetherston J.D."/>
            <person name="Lindler L.E."/>
            <person name="Brubaker R.R."/>
            <person name="Plano G.V."/>
            <person name="Straley S.C."/>
            <person name="McDonough K.A."/>
            <person name="Nilles M.L."/>
            <person name="Matson J.S."/>
            <person name="Blattner F.R."/>
            <person name="Perry R.D."/>
        </authorList>
    </citation>
    <scope>NUCLEOTIDE SEQUENCE [LARGE SCALE GENOMIC DNA]</scope>
    <source>
        <strain>KIM10+ / Biovar Mediaevalis</strain>
    </source>
</reference>
<reference key="3">
    <citation type="journal article" date="2004" name="DNA Res.">
        <title>Complete genome sequence of Yersinia pestis strain 91001, an isolate avirulent to humans.</title>
        <authorList>
            <person name="Song Y."/>
            <person name="Tong Z."/>
            <person name="Wang J."/>
            <person name="Wang L."/>
            <person name="Guo Z."/>
            <person name="Han Y."/>
            <person name="Zhang J."/>
            <person name="Pei D."/>
            <person name="Zhou D."/>
            <person name="Qin H."/>
            <person name="Pang X."/>
            <person name="Han Y."/>
            <person name="Zhai J."/>
            <person name="Li M."/>
            <person name="Cui B."/>
            <person name="Qi Z."/>
            <person name="Jin L."/>
            <person name="Dai R."/>
            <person name="Chen F."/>
            <person name="Li S."/>
            <person name="Ye C."/>
            <person name="Du Z."/>
            <person name="Lin W."/>
            <person name="Wang J."/>
            <person name="Yu J."/>
            <person name="Yang H."/>
            <person name="Wang J."/>
            <person name="Huang P."/>
            <person name="Yang R."/>
        </authorList>
    </citation>
    <scope>NUCLEOTIDE SEQUENCE [LARGE SCALE GENOMIC DNA]</scope>
    <source>
        <strain>91001 / Biovar Mediaevalis</strain>
    </source>
</reference>
<gene>
    <name evidence="1" type="primary">nqrB</name>
    <name type="ordered locus">YPO3239</name>
    <name type="ordered locus">y0952</name>
    <name type="ordered locus">YP_0694</name>
</gene>
<proteinExistence type="inferred from homology"/>